<protein>
    <recommendedName>
        <fullName evidence="1">Endoribonuclease YbeY</fullName>
        <ecNumber evidence="1">3.1.-.-</ecNumber>
    </recommendedName>
</protein>
<feature type="chain" id="PRO_1000057065" description="Endoribonuclease YbeY">
    <location>
        <begin position="1"/>
        <end position="140"/>
    </location>
</feature>
<feature type="binding site" evidence="1">
    <location>
        <position position="101"/>
    </location>
    <ligand>
        <name>Zn(2+)</name>
        <dbReference type="ChEBI" id="CHEBI:29105"/>
        <note>catalytic</note>
    </ligand>
</feature>
<feature type="binding site" evidence="1">
    <location>
        <position position="105"/>
    </location>
    <ligand>
        <name>Zn(2+)</name>
        <dbReference type="ChEBI" id="CHEBI:29105"/>
        <note>catalytic</note>
    </ligand>
</feature>
<feature type="binding site" evidence="1">
    <location>
        <position position="111"/>
    </location>
    <ligand>
        <name>Zn(2+)</name>
        <dbReference type="ChEBI" id="CHEBI:29105"/>
        <note>catalytic</note>
    </ligand>
</feature>
<accession>A8ET67</accession>
<evidence type="ECO:0000255" key="1">
    <source>
        <dbReference type="HAMAP-Rule" id="MF_00009"/>
    </source>
</evidence>
<organism>
    <name type="scientific">Aliarcobacter butzleri (strain RM4018)</name>
    <name type="common">Arcobacter butzleri</name>
    <dbReference type="NCBI Taxonomy" id="367737"/>
    <lineage>
        <taxon>Bacteria</taxon>
        <taxon>Pseudomonadati</taxon>
        <taxon>Campylobacterota</taxon>
        <taxon>Epsilonproteobacteria</taxon>
        <taxon>Campylobacterales</taxon>
        <taxon>Arcobacteraceae</taxon>
        <taxon>Aliarcobacter</taxon>
    </lineage>
</organism>
<dbReference type="EC" id="3.1.-.-" evidence="1"/>
<dbReference type="EMBL" id="CP000361">
    <property type="protein sequence ID" value="ABV67141.1"/>
    <property type="molecule type" value="Genomic_DNA"/>
</dbReference>
<dbReference type="RefSeq" id="WP_012012609.1">
    <property type="nucleotide sequence ID" value="NC_009850.1"/>
</dbReference>
<dbReference type="SMR" id="A8ET67"/>
<dbReference type="STRING" id="367737.Abu_0881"/>
<dbReference type="GeneID" id="24303670"/>
<dbReference type="KEGG" id="abu:Abu_0881"/>
<dbReference type="eggNOG" id="COG0319">
    <property type="taxonomic scope" value="Bacteria"/>
</dbReference>
<dbReference type="HOGENOM" id="CLU_106710_3_0_7"/>
<dbReference type="Proteomes" id="UP000001136">
    <property type="component" value="Chromosome"/>
</dbReference>
<dbReference type="GO" id="GO:0005737">
    <property type="term" value="C:cytoplasm"/>
    <property type="evidence" value="ECO:0007669"/>
    <property type="project" value="UniProtKB-SubCell"/>
</dbReference>
<dbReference type="GO" id="GO:0004222">
    <property type="term" value="F:metalloendopeptidase activity"/>
    <property type="evidence" value="ECO:0007669"/>
    <property type="project" value="InterPro"/>
</dbReference>
<dbReference type="GO" id="GO:0004521">
    <property type="term" value="F:RNA endonuclease activity"/>
    <property type="evidence" value="ECO:0007669"/>
    <property type="project" value="UniProtKB-UniRule"/>
</dbReference>
<dbReference type="GO" id="GO:0008270">
    <property type="term" value="F:zinc ion binding"/>
    <property type="evidence" value="ECO:0007669"/>
    <property type="project" value="UniProtKB-UniRule"/>
</dbReference>
<dbReference type="GO" id="GO:0006364">
    <property type="term" value="P:rRNA processing"/>
    <property type="evidence" value="ECO:0007669"/>
    <property type="project" value="UniProtKB-UniRule"/>
</dbReference>
<dbReference type="Gene3D" id="3.40.390.30">
    <property type="entry name" value="Metalloproteases ('zincins'), catalytic domain"/>
    <property type="match status" value="1"/>
</dbReference>
<dbReference type="HAMAP" id="MF_00009">
    <property type="entry name" value="Endoribonucl_YbeY"/>
    <property type="match status" value="1"/>
</dbReference>
<dbReference type="InterPro" id="IPR023091">
    <property type="entry name" value="MetalPrtase_cat_dom_sf_prd"/>
</dbReference>
<dbReference type="InterPro" id="IPR002036">
    <property type="entry name" value="YbeY"/>
</dbReference>
<dbReference type="InterPro" id="IPR020549">
    <property type="entry name" value="YbeY_CS"/>
</dbReference>
<dbReference type="NCBIfam" id="TIGR00043">
    <property type="entry name" value="rRNA maturation RNase YbeY"/>
    <property type="match status" value="1"/>
</dbReference>
<dbReference type="PANTHER" id="PTHR46986">
    <property type="entry name" value="ENDORIBONUCLEASE YBEY, CHLOROPLASTIC"/>
    <property type="match status" value="1"/>
</dbReference>
<dbReference type="PANTHER" id="PTHR46986:SF1">
    <property type="entry name" value="ENDORIBONUCLEASE YBEY, CHLOROPLASTIC"/>
    <property type="match status" value="1"/>
</dbReference>
<dbReference type="Pfam" id="PF02130">
    <property type="entry name" value="YbeY"/>
    <property type="match status" value="1"/>
</dbReference>
<dbReference type="SUPFAM" id="SSF55486">
    <property type="entry name" value="Metalloproteases ('zincins'), catalytic domain"/>
    <property type="match status" value="1"/>
</dbReference>
<dbReference type="PROSITE" id="PS01306">
    <property type="entry name" value="UPF0054"/>
    <property type="match status" value="1"/>
</dbReference>
<comment type="function">
    <text evidence="1">Single strand-specific metallo-endoribonuclease involved in late-stage 70S ribosome quality control and in maturation of the 3' terminus of the 16S rRNA.</text>
</comment>
<comment type="cofactor">
    <cofactor evidence="1">
        <name>Zn(2+)</name>
        <dbReference type="ChEBI" id="CHEBI:29105"/>
    </cofactor>
    <text evidence="1">Binds 1 zinc ion.</text>
</comment>
<comment type="subcellular location">
    <subcellularLocation>
        <location evidence="1">Cytoplasm</location>
    </subcellularLocation>
</comment>
<comment type="similarity">
    <text evidence="1">Belongs to the endoribonuclease YbeY family.</text>
</comment>
<sequence>MIDLENSTEFEIDTLNLENIANTLTTKDIELIVVKNDEIQELNKEYRNIDKPTDVLSFPMNFEVIDMPLLGSIVISTDFVQEKAKEFKHSFNEEFTLLFIHGLLHLLGFDHEIDNGEHRLKEEELIEKFKLPSSLIVRNS</sequence>
<proteinExistence type="inferred from homology"/>
<keyword id="KW-0963">Cytoplasm</keyword>
<keyword id="KW-0255">Endonuclease</keyword>
<keyword id="KW-0378">Hydrolase</keyword>
<keyword id="KW-0479">Metal-binding</keyword>
<keyword id="KW-0540">Nuclease</keyword>
<keyword id="KW-1185">Reference proteome</keyword>
<keyword id="KW-0690">Ribosome biogenesis</keyword>
<keyword id="KW-0698">rRNA processing</keyword>
<keyword id="KW-0862">Zinc</keyword>
<gene>
    <name evidence="1" type="primary">ybeY</name>
    <name type="ordered locus">Abu_0881</name>
</gene>
<name>YBEY_ALIB4</name>
<reference key="1">
    <citation type="journal article" date="2007" name="PLoS ONE">
        <title>The complete genome sequence and analysis of the Epsilonproteobacterium Arcobacter butzleri.</title>
        <authorList>
            <person name="Miller W.G."/>
            <person name="Parker C.T."/>
            <person name="Rubenfield M."/>
            <person name="Mendz G.L."/>
            <person name="Woesten M.M.S.M."/>
            <person name="Ussery D.W."/>
            <person name="Stolz J.F."/>
            <person name="Binnewies T.T."/>
            <person name="Hallin P.F."/>
            <person name="Wang G."/>
            <person name="Malek J.A."/>
            <person name="Rogosin A."/>
            <person name="Stanker L.H."/>
            <person name="Mandrell R.E."/>
        </authorList>
    </citation>
    <scope>NUCLEOTIDE SEQUENCE [LARGE SCALE GENOMIC DNA]</scope>
    <source>
        <strain>RM4018</strain>
    </source>
</reference>